<keyword id="KW-0030">Aminoacyl-tRNA synthetase</keyword>
<keyword id="KW-0067">ATP-binding</keyword>
<keyword id="KW-0963">Cytoplasm</keyword>
<keyword id="KW-0436">Ligase</keyword>
<keyword id="KW-0479">Metal-binding</keyword>
<keyword id="KW-0547">Nucleotide-binding</keyword>
<keyword id="KW-0648">Protein biosynthesis</keyword>
<keyword id="KW-0862">Zinc</keyword>
<gene>
    <name evidence="1" type="primary">ileS</name>
    <name type="ordered locus">SH1722</name>
</gene>
<dbReference type="EC" id="6.1.1.5" evidence="1"/>
<dbReference type="EMBL" id="AP006716">
    <property type="protein sequence ID" value="BAE05031.1"/>
    <property type="molecule type" value="Genomic_DNA"/>
</dbReference>
<dbReference type="RefSeq" id="WP_011276007.1">
    <property type="nucleotide sequence ID" value="NC_007168.1"/>
</dbReference>
<dbReference type="SMR" id="Q4L5P4"/>
<dbReference type="GeneID" id="93781100"/>
<dbReference type="KEGG" id="sha:SH1722"/>
<dbReference type="eggNOG" id="COG0060">
    <property type="taxonomic scope" value="Bacteria"/>
</dbReference>
<dbReference type="HOGENOM" id="CLU_001493_7_1_9"/>
<dbReference type="OrthoDB" id="9810365at2"/>
<dbReference type="Proteomes" id="UP000000543">
    <property type="component" value="Chromosome"/>
</dbReference>
<dbReference type="GO" id="GO:0005829">
    <property type="term" value="C:cytosol"/>
    <property type="evidence" value="ECO:0007669"/>
    <property type="project" value="TreeGrafter"/>
</dbReference>
<dbReference type="GO" id="GO:0002161">
    <property type="term" value="F:aminoacyl-tRNA deacylase activity"/>
    <property type="evidence" value="ECO:0007669"/>
    <property type="project" value="InterPro"/>
</dbReference>
<dbReference type="GO" id="GO:0005524">
    <property type="term" value="F:ATP binding"/>
    <property type="evidence" value="ECO:0007669"/>
    <property type="project" value="UniProtKB-UniRule"/>
</dbReference>
<dbReference type="GO" id="GO:0004822">
    <property type="term" value="F:isoleucine-tRNA ligase activity"/>
    <property type="evidence" value="ECO:0007669"/>
    <property type="project" value="UniProtKB-UniRule"/>
</dbReference>
<dbReference type="GO" id="GO:0000049">
    <property type="term" value="F:tRNA binding"/>
    <property type="evidence" value="ECO:0007669"/>
    <property type="project" value="InterPro"/>
</dbReference>
<dbReference type="GO" id="GO:0008270">
    <property type="term" value="F:zinc ion binding"/>
    <property type="evidence" value="ECO:0007669"/>
    <property type="project" value="UniProtKB-UniRule"/>
</dbReference>
<dbReference type="GO" id="GO:0006428">
    <property type="term" value="P:isoleucyl-tRNA aminoacylation"/>
    <property type="evidence" value="ECO:0007669"/>
    <property type="project" value="UniProtKB-UniRule"/>
</dbReference>
<dbReference type="CDD" id="cd07960">
    <property type="entry name" value="Anticodon_Ia_Ile_BEm"/>
    <property type="match status" value="1"/>
</dbReference>
<dbReference type="CDD" id="cd00818">
    <property type="entry name" value="IleRS_core"/>
    <property type="match status" value="1"/>
</dbReference>
<dbReference type="FunFam" id="1.10.10.830:FF:000001">
    <property type="entry name" value="Isoleucine--tRNA ligase"/>
    <property type="match status" value="1"/>
</dbReference>
<dbReference type="FunFam" id="1.10.730.20:FF:000001">
    <property type="entry name" value="Isoleucine--tRNA ligase"/>
    <property type="match status" value="1"/>
</dbReference>
<dbReference type="FunFam" id="3.40.50.620:FF:000152">
    <property type="entry name" value="Isoleucine--tRNA ligase"/>
    <property type="match status" value="1"/>
</dbReference>
<dbReference type="FunFam" id="3.90.740.10:FF:000006">
    <property type="entry name" value="Isoleucine--tRNA ligase"/>
    <property type="match status" value="1"/>
</dbReference>
<dbReference type="Gene3D" id="1.10.730.20">
    <property type="match status" value="1"/>
</dbReference>
<dbReference type="Gene3D" id="3.40.50.620">
    <property type="entry name" value="HUPs"/>
    <property type="match status" value="2"/>
</dbReference>
<dbReference type="Gene3D" id="1.10.10.830">
    <property type="entry name" value="Ile-tRNA synthetase CP2 domain-like"/>
    <property type="match status" value="1"/>
</dbReference>
<dbReference type="HAMAP" id="MF_02002">
    <property type="entry name" value="Ile_tRNA_synth_type1"/>
    <property type="match status" value="1"/>
</dbReference>
<dbReference type="InterPro" id="IPR001412">
    <property type="entry name" value="aa-tRNA-synth_I_CS"/>
</dbReference>
<dbReference type="InterPro" id="IPR002300">
    <property type="entry name" value="aa-tRNA-synth_Ia"/>
</dbReference>
<dbReference type="InterPro" id="IPR033708">
    <property type="entry name" value="Anticodon_Ile_BEm"/>
</dbReference>
<dbReference type="InterPro" id="IPR002301">
    <property type="entry name" value="Ile-tRNA-ligase"/>
</dbReference>
<dbReference type="InterPro" id="IPR023585">
    <property type="entry name" value="Ile-tRNA-ligase_type1"/>
</dbReference>
<dbReference type="InterPro" id="IPR050081">
    <property type="entry name" value="Ile-tRNA_ligase"/>
</dbReference>
<dbReference type="InterPro" id="IPR013155">
    <property type="entry name" value="M/V/L/I-tRNA-synth_anticd-bd"/>
</dbReference>
<dbReference type="InterPro" id="IPR014729">
    <property type="entry name" value="Rossmann-like_a/b/a_fold"/>
</dbReference>
<dbReference type="InterPro" id="IPR009080">
    <property type="entry name" value="tRNAsynth_Ia_anticodon-bd"/>
</dbReference>
<dbReference type="InterPro" id="IPR009008">
    <property type="entry name" value="Val/Leu/Ile-tRNA-synth_edit"/>
</dbReference>
<dbReference type="InterPro" id="IPR010663">
    <property type="entry name" value="Znf_FPG/IleRS"/>
</dbReference>
<dbReference type="NCBIfam" id="TIGR00392">
    <property type="entry name" value="ileS"/>
    <property type="match status" value="1"/>
</dbReference>
<dbReference type="PANTHER" id="PTHR42765:SF1">
    <property type="entry name" value="ISOLEUCINE--TRNA LIGASE, MITOCHONDRIAL"/>
    <property type="match status" value="1"/>
</dbReference>
<dbReference type="PANTHER" id="PTHR42765">
    <property type="entry name" value="SOLEUCYL-TRNA SYNTHETASE"/>
    <property type="match status" value="1"/>
</dbReference>
<dbReference type="Pfam" id="PF08264">
    <property type="entry name" value="Anticodon_1"/>
    <property type="match status" value="1"/>
</dbReference>
<dbReference type="Pfam" id="PF00133">
    <property type="entry name" value="tRNA-synt_1"/>
    <property type="match status" value="1"/>
</dbReference>
<dbReference type="Pfam" id="PF06827">
    <property type="entry name" value="zf-FPG_IleRS"/>
    <property type="match status" value="1"/>
</dbReference>
<dbReference type="PRINTS" id="PR00984">
    <property type="entry name" value="TRNASYNTHILE"/>
</dbReference>
<dbReference type="SUPFAM" id="SSF47323">
    <property type="entry name" value="Anticodon-binding domain of a subclass of class I aminoacyl-tRNA synthetases"/>
    <property type="match status" value="1"/>
</dbReference>
<dbReference type="SUPFAM" id="SSF52374">
    <property type="entry name" value="Nucleotidylyl transferase"/>
    <property type="match status" value="1"/>
</dbReference>
<dbReference type="SUPFAM" id="SSF50677">
    <property type="entry name" value="ValRS/IleRS/LeuRS editing domain"/>
    <property type="match status" value="1"/>
</dbReference>
<dbReference type="PROSITE" id="PS00178">
    <property type="entry name" value="AA_TRNA_LIGASE_I"/>
    <property type="match status" value="1"/>
</dbReference>
<organism>
    <name type="scientific">Staphylococcus haemolyticus (strain JCSC1435)</name>
    <dbReference type="NCBI Taxonomy" id="279808"/>
    <lineage>
        <taxon>Bacteria</taxon>
        <taxon>Bacillati</taxon>
        <taxon>Bacillota</taxon>
        <taxon>Bacilli</taxon>
        <taxon>Bacillales</taxon>
        <taxon>Staphylococcaceae</taxon>
        <taxon>Staphylococcus</taxon>
    </lineage>
</organism>
<comment type="function">
    <text evidence="1">Catalyzes the attachment of isoleucine to tRNA(Ile). As IleRS can inadvertently accommodate and process structurally similar amino acids such as valine, to avoid such errors it has two additional distinct tRNA(Ile)-dependent editing activities. One activity is designated as 'pretransfer' editing and involves the hydrolysis of activated Val-AMP. The other activity is designated 'posttransfer' editing and involves deacylation of mischarged Val-tRNA(Ile).</text>
</comment>
<comment type="catalytic activity">
    <reaction evidence="1">
        <text>tRNA(Ile) + L-isoleucine + ATP = L-isoleucyl-tRNA(Ile) + AMP + diphosphate</text>
        <dbReference type="Rhea" id="RHEA:11060"/>
        <dbReference type="Rhea" id="RHEA-COMP:9666"/>
        <dbReference type="Rhea" id="RHEA-COMP:9695"/>
        <dbReference type="ChEBI" id="CHEBI:30616"/>
        <dbReference type="ChEBI" id="CHEBI:33019"/>
        <dbReference type="ChEBI" id="CHEBI:58045"/>
        <dbReference type="ChEBI" id="CHEBI:78442"/>
        <dbReference type="ChEBI" id="CHEBI:78528"/>
        <dbReference type="ChEBI" id="CHEBI:456215"/>
        <dbReference type="EC" id="6.1.1.5"/>
    </reaction>
</comment>
<comment type="cofactor">
    <cofactor evidence="1">
        <name>Zn(2+)</name>
        <dbReference type="ChEBI" id="CHEBI:29105"/>
    </cofactor>
    <text evidence="1">Binds 1 zinc ion per subunit.</text>
</comment>
<comment type="subunit">
    <text evidence="1">Monomer.</text>
</comment>
<comment type="subcellular location">
    <subcellularLocation>
        <location evidence="1">Cytoplasm</location>
    </subcellularLocation>
</comment>
<comment type="domain">
    <text evidence="1">IleRS has two distinct active sites: one for aminoacylation and one for editing. The misactivated valine is translocated from the active site to the editing site, which sterically excludes the correctly activated isoleucine. The single editing site contains two valyl binding pockets, one specific for each substrate (Val-AMP or Val-tRNA(Ile)).</text>
</comment>
<comment type="similarity">
    <text evidence="1">Belongs to the class-I aminoacyl-tRNA synthetase family. IleS type 1 subfamily.</text>
</comment>
<proteinExistence type="inferred from homology"/>
<sequence>MNYKDTLLMPKTDFPMRGGLPNKEPQIQEQWEANNQYQKALEKNKGNQSYILHDGPPYANGNLHMGHALNKIIKDIIVRYKTMQGFYAPYVPGWDTHGLPIEQALTKKGVDRKKMSIAEFREKCKEFALEQIELQKKDFKRLGVRGDFNDPYITLKPEYEAAQIRLFGEMADKGLIYKGKKPVYWSPSSESSLAEAEIEYHDKRSASIYVAFDVKDTKGVVDQDAQFIIWTTTPWTIPSNVAITVHPDLKYGQYNVNGKKYIIAQALSEDVAEALEWDKDAIQLEKEFTGKELEYVEAQHPFLDRISLVINGNHVTTDAGTGCVHTAPGHGEDDYIVGQKYDLPVISPLDDKGVFTEEGGQFEGMFYDKANKAVTDLLTEKDALLKLNFITHSYPHDWRTKKPVIFRATPQWFASINKVRQDILDAIEETDFKVDWGKTRIYNMIRDRGEWVISRQRVWGVPLPVFYAENGDIIMTKETVNHVADLFEEHGSNIWFEREAKDLLPEGFTHPGSPNGTFTKEMDIMDVWFDSGSSHRGVLENRPELSFPADLYFEGSDQYRGWFNSSITTAVATRGQAPYKFLLSHGFVMDGEGKKMSKSLGNVIVPDQVVKQKGADIARLWVSSTDYLADVRISDEILKQTSDVYRKIRNTLRFMLGNINDFNPDTDVIPEAELLEVDRYLLNRLREFTASTIEHYDNFDYLNIYQEVQNFINVELSNFYLDYGKDILYIEEKNAHKRRSMQTVLYQILVDMTKLLAPILVHTAEEVWTHTPHVKEESVHLADMPKVVEVDQALLDKWNQFMALRDDVNRALEVARNNKVIGKSLEAKVVIGNNDNFKAAEFLQQFEDLQQLFIVSQVEVSDSVDNAEAYQHGDIRIDHAVGEKCERCWNYTEELGSVGELEHLCPRCQEVVKTLV</sequence>
<accession>Q4L5P4</accession>
<reference key="1">
    <citation type="journal article" date="2005" name="J. Bacteriol.">
        <title>Whole-genome sequencing of Staphylococcus haemolyticus uncovers the extreme plasticity of its genome and the evolution of human-colonizing staphylococcal species.</title>
        <authorList>
            <person name="Takeuchi F."/>
            <person name="Watanabe S."/>
            <person name="Baba T."/>
            <person name="Yuzawa H."/>
            <person name="Ito T."/>
            <person name="Morimoto Y."/>
            <person name="Kuroda M."/>
            <person name="Cui L."/>
            <person name="Takahashi M."/>
            <person name="Ankai A."/>
            <person name="Baba S."/>
            <person name="Fukui S."/>
            <person name="Lee J.C."/>
            <person name="Hiramatsu K."/>
        </authorList>
    </citation>
    <scope>NUCLEOTIDE SEQUENCE [LARGE SCALE GENOMIC DNA]</scope>
    <source>
        <strain>JCSC1435</strain>
    </source>
</reference>
<evidence type="ECO:0000255" key="1">
    <source>
        <dbReference type="HAMAP-Rule" id="MF_02002"/>
    </source>
</evidence>
<protein>
    <recommendedName>
        <fullName evidence="1">Isoleucine--tRNA ligase</fullName>
        <ecNumber evidence="1">6.1.1.5</ecNumber>
    </recommendedName>
    <alternativeName>
        <fullName evidence="1">Isoleucyl-tRNA synthetase</fullName>
        <shortName evidence="1">IleRS</shortName>
    </alternativeName>
</protein>
<name>SYI_STAHJ</name>
<feature type="chain" id="PRO_0000098473" description="Isoleucine--tRNA ligase">
    <location>
        <begin position="1"/>
        <end position="916"/>
    </location>
</feature>
<feature type="short sequence motif" description="'HIGH' region">
    <location>
        <begin position="57"/>
        <end position="67"/>
    </location>
</feature>
<feature type="short sequence motif" description="'KMSKS' region">
    <location>
        <begin position="595"/>
        <end position="599"/>
    </location>
</feature>
<feature type="binding site" evidence="1">
    <location>
        <position position="554"/>
    </location>
    <ligand>
        <name>L-isoleucyl-5'-AMP</name>
        <dbReference type="ChEBI" id="CHEBI:178002"/>
    </ligand>
</feature>
<feature type="binding site" evidence="1">
    <location>
        <position position="598"/>
    </location>
    <ligand>
        <name>ATP</name>
        <dbReference type="ChEBI" id="CHEBI:30616"/>
    </ligand>
</feature>
<feature type="binding site" evidence="1">
    <location>
        <position position="885"/>
    </location>
    <ligand>
        <name>Zn(2+)</name>
        <dbReference type="ChEBI" id="CHEBI:29105"/>
    </ligand>
</feature>
<feature type="binding site" evidence="1">
    <location>
        <position position="888"/>
    </location>
    <ligand>
        <name>Zn(2+)</name>
        <dbReference type="ChEBI" id="CHEBI:29105"/>
    </ligand>
</feature>
<feature type="binding site" evidence="1">
    <location>
        <position position="905"/>
    </location>
    <ligand>
        <name>Zn(2+)</name>
        <dbReference type="ChEBI" id="CHEBI:29105"/>
    </ligand>
</feature>
<feature type="binding site" evidence="1">
    <location>
        <position position="908"/>
    </location>
    <ligand>
        <name>Zn(2+)</name>
        <dbReference type="ChEBI" id="CHEBI:29105"/>
    </ligand>
</feature>